<evidence type="ECO:0000255" key="1">
    <source>
        <dbReference type="HAMAP-Rule" id="MF_00357"/>
    </source>
</evidence>
<evidence type="ECO:0000255" key="2">
    <source>
        <dbReference type="PROSITE-ProRule" id="PRU01261"/>
    </source>
</evidence>
<evidence type="ECO:0000256" key="3">
    <source>
        <dbReference type="SAM" id="MobiDB-lite"/>
    </source>
</evidence>
<proteinExistence type="inferred from homology"/>
<organism>
    <name type="scientific">Bacillus licheniformis (strain ATCC 14580 / DSM 13 / JCM 2505 / CCUG 7422 / NBRC 12200 / NCIMB 9375 / NCTC 10341 / NRRL NRS-1264 / Gibson 46)</name>
    <dbReference type="NCBI Taxonomy" id="279010"/>
    <lineage>
        <taxon>Bacteria</taxon>
        <taxon>Bacillati</taxon>
        <taxon>Bacillota</taxon>
        <taxon>Bacilli</taxon>
        <taxon>Bacillales</taxon>
        <taxon>Bacillaceae</taxon>
        <taxon>Bacillus</taxon>
    </lineage>
</organism>
<accession>Q65DT6</accession>
<accession>Q62PA8</accession>
<protein>
    <recommendedName>
        <fullName evidence="1">Probable DNA-directed RNA polymerase subunit delta</fullName>
    </recommendedName>
    <alternativeName>
        <fullName evidence="1">RNAP delta factor</fullName>
    </alternativeName>
</protein>
<comment type="function">
    <text evidence="1">Participates in both the initiation and recycling phases of transcription. In the presence of the delta subunit, RNAP displays an increased specificity of transcription, a decreased affinity for nucleic acids, and an increased efficiency of RNA synthesis because of enhanced recycling.</text>
</comment>
<comment type="subunit">
    <text evidence="1">RNAP is composed of a core of 2 alpha, a beta and a beta' subunits. The core is associated with a delta subunit and one of several sigma factors.</text>
</comment>
<comment type="similarity">
    <text evidence="1">Belongs to the RpoE family.</text>
</comment>
<reference key="1">
    <citation type="journal article" date="2004" name="J. Mol. Microbiol. Biotechnol.">
        <title>The complete genome sequence of Bacillus licheniformis DSM13, an organism with great industrial potential.</title>
        <authorList>
            <person name="Veith B."/>
            <person name="Herzberg C."/>
            <person name="Steckel S."/>
            <person name="Feesche J."/>
            <person name="Maurer K.H."/>
            <person name="Ehrenreich P."/>
            <person name="Baeumer S."/>
            <person name="Henne A."/>
            <person name="Liesegang H."/>
            <person name="Merkl R."/>
            <person name="Ehrenreich A."/>
            <person name="Gottschalk G."/>
        </authorList>
    </citation>
    <scope>NUCLEOTIDE SEQUENCE [LARGE SCALE GENOMIC DNA]</scope>
    <source>
        <strain>ATCC 14580 / DSM 13 / JCM 2505 / CCUG 7422 / NBRC 12200 / NCIMB 9375 / NCTC 10341 / NRRL NRS-1264 / Gibson 46</strain>
    </source>
</reference>
<reference key="2">
    <citation type="journal article" date="2004" name="Genome Biol.">
        <title>Complete genome sequence of the industrial bacterium Bacillus licheniformis and comparisons with closely related Bacillus species.</title>
        <authorList>
            <person name="Rey M.W."/>
            <person name="Ramaiya P."/>
            <person name="Nelson B.A."/>
            <person name="Brody-Karpin S.D."/>
            <person name="Zaretsky E.J."/>
            <person name="Tang M."/>
            <person name="Lopez de Leon A."/>
            <person name="Xiang H."/>
            <person name="Gusti V."/>
            <person name="Clausen I.G."/>
            <person name="Olsen P.B."/>
            <person name="Rasmussen M.D."/>
            <person name="Andersen J.T."/>
            <person name="Joergensen P.L."/>
            <person name="Larsen T.S."/>
            <person name="Sorokin A."/>
            <person name="Bolotin A."/>
            <person name="Lapidus A."/>
            <person name="Galleron N."/>
            <person name="Ehrlich S.D."/>
            <person name="Berka R.M."/>
        </authorList>
    </citation>
    <scope>NUCLEOTIDE SEQUENCE [LARGE SCALE GENOMIC DNA]</scope>
    <source>
        <strain>ATCC 14580 / DSM 13 / JCM 2505 / CCUG 7422 / NBRC 12200 / NCIMB 9375 / NCTC 10341 / NRRL NRS-1264 / Gibson 46</strain>
    </source>
</reference>
<name>RPOE_BACLD</name>
<feature type="chain" id="PRO_0000303122" description="Probable DNA-directed RNA polymerase subunit delta">
    <location>
        <begin position="1"/>
        <end position="171"/>
    </location>
</feature>
<feature type="domain" description="HTH HARE-type" evidence="2">
    <location>
        <begin position="14"/>
        <end position="81"/>
    </location>
</feature>
<feature type="region of interest" description="Disordered" evidence="3">
    <location>
        <begin position="138"/>
        <end position="171"/>
    </location>
</feature>
<keyword id="KW-0240">DNA-directed RNA polymerase</keyword>
<keyword id="KW-0548">Nucleotidyltransferase</keyword>
<keyword id="KW-1185">Reference proteome</keyword>
<keyword id="KW-0804">Transcription</keyword>
<keyword id="KW-0808">Transferase</keyword>
<gene>
    <name evidence="1" type="primary">rpoE</name>
    <name type="ordered locus">BLi03964</name>
    <name type="ordered locus">BL05358</name>
</gene>
<dbReference type="EMBL" id="CP000002">
    <property type="protein sequence ID" value="AAU25403.1"/>
    <property type="molecule type" value="Genomic_DNA"/>
</dbReference>
<dbReference type="EMBL" id="AE017333">
    <property type="protein sequence ID" value="AAU42778.1"/>
    <property type="molecule type" value="Genomic_DNA"/>
</dbReference>
<dbReference type="RefSeq" id="WP_003186065.1">
    <property type="nucleotide sequence ID" value="NC_006322.1"/>
</dbReference>
<dbReference type="SMR" id="Q65DT6"/>
<dbReference type="STRING" id="279010.BL05358"/>
<dbReference type="GeneID" id="92859463"/>
<dbReference type="KEGG" id="bld:BLi03964"/>
<dbReference type="KEGG" id="bli:BL05358"/>
<dbReference type="eggNOG" id="COG3343">
    <property type="taxonomic scope" value="Bacteria"/>
</dbReference>
<dbReference type="HOGENOM" id="CLU_116648_1_0_9"/>
<dbReference type="Proteomes" id="UP000000606">
    <property type="component" value="Chromosome"/>
</dbReference>
<dbReference type="GO" id="GO:0000428">
    <property type="term" value="C:DNA-directed RNA polymerase complex"/>
    <property type="evidence" value="ECO:0007669"/>
    <property type="project" value="UniProtKB-KW"/>
</dbReference>
<dbReference type="GO" id="GO:0003899">
    <property type="term" value="F:DNA-directed RNA polymerase activity"/>
    <property type="evidence" value="ECO:0007669"/>
    <property type="project" value="UniProtKB-UniRule"/>
</dbReference>
<dbReference type="GO" id="GO:0006351">
    <property type="term" value="P:DNA-templated transcription"/>
    <property type="evidence" value="ECO:0007669"/>
    <property type="project" value="InterPro"/>
</dbReference>
<dbReference type="GO" id="GO:0006355">
    <property type="term" value="P:regulation of DNA-templated transcription"/>
    <property type="evidence" value="ECO:0007669"/>
    <property type="project" value="UniProtKB-UniRule"/>
</dbReference>
<dbReference type="Gene3D" id="1.10.10.1250">
    <property type="entry name" value="RNA polymerase, subunit delta, N-terminal domain"/>
    <property type="match status" value="1"/>
</dbReference>
<dbReference type="HAMAP" id="MF_00357">
    <property type="entry name" value="RNApol_bact_RpoE"/>
    <property type="match status" value="1"/>
</dbReference>
<dbReference type="InterPro" id="IPR007759">
    <property type="entry name" value="Asxl_HARE-HTH"/>
</dbReference>
<dbReference type="InterPro" id="IPR038087">
    <property type="entry name" value="RNAP_delta_N_dom_sf"/>
</dbReference>
<dbReference type="InterPro" id="IPR029757">
    <property type="entry name" value="RpoE"/>
</dbReference>
<dbReference type="NCBIfam" id="TIGR04567">
    <property type="entry name" value="RNAP_delt_lowGC"/>
    <property type="match status" value="1"/>
</dbReference>
<dbReference type="Pfam" id="PF05066">
    <property type="entry name" value="HARE-HTH"/>
    <property type="match status" value="1"/>
</dbReference>
<dbReference type="PROSITE" id="PS51913">
    <property type="entry name" value="HTH_HARE"/>
    <property type="match status" value="1"/>
</dbReference>
<sequence>MSLKQYSEEQLKEMALVEIAYEIFSEHKKPITFQELTDQVASLLGMGKEELEDRIAQFYTDLNIDGRFLALSDQTWGLRSWYPYDQLDEETQPTVKAKKKKAKKAVEEDLDLDEFEEIDEDDILLDDVEEDLDIDADEFDEIDEADDDELDDLEDEILDDDEDFDEEEDEE</sequence>